<protein>
    <recommendedName>
        <fullName>Cholera toxin homolog transcriptional activator</fullName>
    </recommendedName>
</protein>
<name>TOXR_VIBPA</name>
<comment type="function">
    <text>In the presence of ToxS, promotes the expression of the thermostable direct hemolysin 2. May be a global regulator.</text>
</comment>
<comment type="subcellular location">
    <subcellularLocation>
        <location evidence="4">Cell membrane</location>
        <topology evidence="4">Single-pass membrane protein</topology>
    </subcellularLocation>
</comment>
<accession>Q05938</accession>
<accession>Q9K309</accession>
<accession>Q9K310</accession>
<accession>Q9K314</accession>
<accession>Q9K349</accession>
<reference key="1">
    <citation type="journal article" date="1993" name="J. Bacteriol.">
        <title>Vibrio parahaemolyticus has a homolog of the Vibrio cholerae toxRS operon that mediates environmentally induced regulation of the thermostable direct hemolysin gene.</title>
        <authorList>
            <person name="Lin Z."/>
            <person name="Kumagai K."/>
            <person name="Baba K."/>
            <person name="Mekalanos J.J."/>
            <person name="Nishibuchi M."/>
        </authorList>
    </citation>
    <scope>NUCLEOTIDE SEQUENCE [GENOMIC DNA]</scope>
    <source>
        <strain>AQ3815</strain>
    </source>
</reference>
<reference key="2">
    <citation type="journal article" date="2000" name="J. Clin. Microbiol.">
        <title>Pandemic spread of an O3:K6 clone of Vibrio parahaemolyticus and emergence of related strains evidenced by arbitrarily primed PCR and toxRS sequence analyses.</title>
        <authorList>
            <person name="Matsumoto C."/>
            <person name="Okuda J."/>
            <person name="Ishibashi M."/>
            <person name="Iwanaga M."/>
            <person name="Garg P."/>
            <person name="Rammamurthy T."/>
            <person name="Wong H.-C."/>
            <person name="Depaola A."/>
            <person name="Kim Y.B."/>
            <person name="Albert M.J."/>
            <person name="Nishibuchi M."/>
        </authorList>
    </citation>
    <scope>NUCLEOTIDE SEQUENCE [GENOMIC DNA]</scope>
    <source>
        <strain>AN-16000 / Serotype O1:KUT</strain>
        <strain>AN-5034 / Serotype O4:K68</strain>
        <strain>AN-8917</strain>
        <strain>AQ3810 / Serotype O3:K6</strain>
        <strain>AQ4901 / Serotype O3:K6</strain>
        <strain>ATCC BAA-239 / VP81 / Serotype O3:K6</strain>
        <strain>BE98-2062 / Serotype O3:K6</strain>
        <strain>DOH272 / Serotype O3:K6</strain>
        <strain>FIHES98V14-1 / Serotype O3:K6</strain>
        <strain>JKY-VP6 / Serotype O3:K6</strain>
        <strain>U-5474 / Serotype O3:K6</strain>
        <strain>VP108 / Serotype O3:K6</strain>
        <strain>Y-27669</strain>
    </source>
</reference>
<reference key="3">
    <citation type="submission" date="2001-06" db="EMBL/GenBank/DDBJ databases">
        <title>Prevalence of a pandemic clone and its diversity among Vibrio parahaemolyticus strains isolated from the patients with diarrhea in southern Thailand.</title>
        <authorList>
            <person name="Laohaprertthisan V."/>
            <person name="Chowdhury A."/>
            <person name="Kongmuang U."/>
            <person name="Kalnauwakul S."/>
            <person name="Ishibashi M."/>
            <person name="Matsumoto C."/>
            <person name="Nishibuchi V."/>
        </authorList>
    </citation>
    <scope>NUCLEOTIDE SEQUENCE [GENOMIC DNA]</scope>
    <source>
        <strain>VPHY191</strain>
        <strain>VPHY197</strain>
        <strain>VPHY216</strain>
    </source>
</reference>
<reference key="4">
    <citation type="submission" date="2004-01" db="EMBL/GenBank/DDBJ databases">
        <title>Inferred lineage of pandemic Vibrio parahaemolyticus strains by comparison of their 16S rRNA genes and 16S-23S rRNA spacers.</title>
        <authorList>
            <person name="Gonzalez N."/>
            <person name="Romero J."/>
            <person name="Moreno C."/>
            <person name="Torres J."/>
            <person name="Guzman C.A."/>
            <person name="Espejo R.T."/>
        </authorList>
    </citation>
    <scope>NUCLEOTIDE SEQUENCE [GENOMIC DNA]</scope>
    <source>
        <strain>RIMD 2210086</strain>
    </source>
</reference>
<reference key="5">
    <citation type="journal article" date="2003" name="Lancet">
        <title>Genome sequence of Vibrio parahaemolyticus: a pathogenic mechanism distinct from that of V. cholerae.</title>
        <authorList>
            <person name="Makino K."/>
            <person name="Oshima K."/>
            <person name="Kurokawa K."/>
            <person name="Yokoyama K."/>
            <person name="Uda T."/>
            <person name="Tagomori K."/>
            <person name="Iijima Y."/>
            <person name="Najima M."/>
            <person name="Nakano M."/>
            <person name="Yamashita A."/>
            <person name="Kubota Y."/>
            <person name="Kimura S."/>
            <person name="Yasunaga T."/>
            <person name="Honda T."/>
            <person name="Shinagawa H."/>
            <person name="Hattori M."/>
            <person name="Iida T."/>
        </authorList>
    </citation>
    <scope>NUCLEOTIDE SEQUENCE [LARGE SCALE GENOMIC DNA]</scope>
    <source>
        <strain>RIMD 2210633</strain>
    </source>
</reference>
<sequence length="292" mass="32578">MTNIGTKFLLAQRFTFDPNSNSLADQQSGNEVVRLGSNESRILLMLAERPNEVLTRNELHEFVWREQGFEVDDSSLTQAISTLRKMLKDSTKSPEFVKTVPKRGYQLICTVERLSPLSSDSSSIEVEEPASDNNDASANEVETIVEPSLATTSDAIVEPEAPVVPEKAPVASAVNPWIPRVILFLALLLPICVLLFTNPAESQFRQIGEYQNVPVMTPVNHPQINNWLPSIEQCIERYVKHHAEDSLPVEVIATGGQNNQLILNYIHDSNHSYENVTLRIFAGQNDPTDICK</sequence>
<feature type="chain" id="PRO_0000081347" description="Cholera toxin homolog transcriptional activator">
    <location>
        <begin position="1"/>
        <end position="292"/>
    </location>
</feature>
<feature type="topological domain" description="Cytoplasmic" evidence="1">
    <location>
        <begin position="1"/>
        <end position="180"/>
    </location>
</feature>
<feature type="transmembrane region" description="Helical" evidence="1">
    <location>
        <begin position="181"/>
        <end position="197"/>
    </location>
</feature>
<feature type="topological domain" description="Periplasmic" evidence="1">
    <location>
        <begin position="198"/>
        <end position="292"/>
    </location>
</feature>
<feature type="DNA-binding region" description="OmpR/PhoB-type" evidence="2">
    <location>
        <begin position="6"/>
        <end position="109"/>
    </location>
</feature>
<feature type="region of interest" description="Disordered" evidence="3">
    <location>
        <begin position="119"/>
        <end position="140"/>
    </location>
</feature>
<feature type="sequence variant" description="In strain: DOH272 and AQ4901.">
    <original>N</original>
    <variation>I</variation>
    <location>
        <position position="134"/>
    </location>
</feature>
<feature type="sequence variant" description="In strain: AQ3810 and U-5474.">
    <original>A</original>
    <variation>T</variation>
    <location>
        <position position="138"/>
    </location>
</feature>
<feature type="sequence variant" description="In strain: DOH272 and AQ4901.">
    <original>SLA</original>
    <variation>PLT</variation>
    <location>
        <begin position="148"/>
        <end position="150"/>
    </location>
</feature>
<feature type="sequence variant" description="In strain: Y-27669, AN-8917 and RIMD 2210086.">
    <original>T</original>
    <variation>P</variation>
    <location>
        <position position="152"/>
    </location>
</feature>
<feature type="sequence variant" description="In strain: AQ3815.">
    <original>T</original>
    <variation>S</variation>
    <location>
        <position position="152"/>
    </location>
</feature>
<feature type="sequence variant" description="In strain: AQ3815.">
    <original>P</original>
    <variation>H</variation>
    <location>
        <position position="169"/>
    </location>
</feature>
<organism>
    <name type="scientific">Vibrio parahaemolyticus serotype O3:K6 (strain RIMD 2210633)</name>
    <dbReference type="NCBI Taxonomy" id="223926"/>
    <lineage>
        <taxon>Bacteria</taxon>
        <taxon>Pseudomonadati</taxon>
        <taxon>Pseudomonadota</taxon>
        <taxon>Gammaproteobacteria</taxon>
        <taxon>Vibrionales</taxon>
        <taxon>Vibrionaceae</taxon>
        <taxon>Vibrio</taxon>
    </lineage>
</organism>
<proteinExistence type="predicted"/>
<keyword id="KW-0010">Activator</keyword>
<keyword id="KW-1003">Cell membrane</keyword>
<keyword id="KW-0238">DNA-binding</keyword>
<keyword id="KW-0472">Membrane</keyword>
<keyword id="KW-0804">Transcription</keyword>
<keyword id="KW-0805">Transcription regulation</keyword>
<keyword id="KW-0812">Transmembrane</keyword>
<keyword id="KW-1133">Transmembrane helix</keyword>
<keyword id="KW-0902">Two-component regulatory system</keyword>
<evidence type="ECO:0000255" key="1"/>
<evidence type="ECO:0000255" key="2">
    <source>
        <dbReference type="PROSITE-ProRule" id="PRU01091"/>
    </source>
</evidence>
<evidence type="ECO:0000256" key="3">
    <source>
        <dbReference type="SAM" id="MobiDB-lite"/>
    </source>
</evidence>
<evidence type="ECO:0000305" key="4"/>
<gene>
    <name type="primary">toxR</name>
    <name type="ordered locus">VP0820</name>
</gene>
<dbReference type="EMBL" id="L11929">
    <property type="protein sequence ID" value="AAA27576.1"/>
    <property type="molecule type" value="Genomic_DNA"/>
</dbReference>
<dbReference type="EMBL" id="AB029903">
    <property type="protein sequence ID" value="BAA89504.1"/>
    <property type="molecule type" value="Genomic_DNA"/>
</dbReference>
<dbReference type="EMBL" id="AB029904">
    <property type="protein sequence ID" value="BAA89506.1"/>
    <property type="molecule type" value="Genomic_DNA"/>
</dbReference>
<dbReference type="EMBL" id="AB029905">
    <property type="protein sequence ID" value="BAA89508.1"/>
    <property type="molecule type" value="Genomic_DNA"/>
</dbReference>
<dbReference type="EMBL" id="AB029906">
    <property type="protein sequence ID" value="BAA89510.1"/>
    <property type="molecule type" value="Genomic_DNA"/>
</dbReference>
<dbReference type="EMBL" id="AB029907">
    <property type="protein sequence ID" value="BAA89512.1"/>
    <property type="molecule type" value="Genomic_DNA"/>
</dbReference>
<dbReference type="EMBL" id="AB029908">
    <property type="protein sequence ID" value="BAA89514.1"/>
    <property type="molecule type" value="Genomic_DNA"/>
</dbReference>
<dbReference type="EMBL" id="AB029909">
    <property type="protein sequence ID" value="BAA89516.1"/>
    <property type="molecule type" value="Genomic_DNA"/>
</dbReference>
<dbReference type="EMBL" id="AB029910">
    <property type="protein sequence ID" value="BAA89518.1"/>
    <property type="molecule type" value="Genomic_DNA"/>
</dbReference>
<dbReference type="EMBL" id="AB029911">
    <property type="protein sequence ID" value="BAA89520.1"/>
    <property type="molecule type" value="Genomic_DNA"/>
</dbReference>
<dbReference type="EMBL" id="AB029912">
    <property type="protein sequence ID" value="BAA89522.1"/>
    <property type="molecule type" value="Genomic_DNA"/>
</dbReference>
<dbReference type="EMBL" id="AB029913">
    <property type="protein sequence ID" value="BAA89524.1"/>
    <property type="molecule type" value="Genomic_DNA"/>
</dbReference>
<dbReference type="EMBL" id="AB029914">
    <property type="protein sequence ID" value="BAA89526.1"/>
    <property type="molecule type" value="Genomic_DNA"/>
</dbReference>
<dbReference type="EMBL" id="AB029915">
    <property type="protein sequence ID" value="BAA89528.1"/>
    <property type="molecule type" value="Genomic_DNA"/>
</dbReference>
<dbReference type="EMBL" id="AB063111">
    <property type="protein sequence ID" value="BAB79249.1"/>
    <property type="molecule type" value="Genomic_DNA"/>
</dbReference>
<dbReference type="EMBL" id="AB063112">
    <property type="protein sequence ID" value="BAB79251.1"/>
    <property type="molecule type" value="Genomic_DNA"/>
</dbReference>
<dbReference type="EMBL" id="AB063113">
    <property type="protein sequence ID" value="BAB79253.1"/>
    <property type="molecule type" value="Genomic_DNA"/>
</dbReference>
<dbReference type="EMBL" id="AY527397">
    <property type="protein sequence ID" value="AAS55476.1"/>
    <property type="molecule type" value="Genomic_DNA"/>
</dbReference>
<dbReference type="EMBL" id="BA000031">
    <property type="protein sequence ID" value="BAC59083.1"/>
    <property type="molecule type" value="Genomic_DNA"/>
</dbReference>
<dbReference type="PIR" id="A47125">
    <property type="entry name" value="A47125"/>
</dbReference>
<dbReference type="RefSeq" id="NP_797199.1">
    <property type="nucleotide sequence ID" value="NC_004603.1"/>
</dbReference>
<dbReference type="RefSeq" id="WP_005478489.1">
    <property type="nucleotide sequence ID" value="NC_004603.1"/>
</dbReference>
<dbReference type="SMR" id="Q05938"/>
<dbReference type="GeneID" id="1188317"/>
<dbReference type="KEGG" id="vpa:VP0820"/>
<dbReference type="PATRIC" id="fig|223926.6.peg.777"/>
<dbReference type="eggNOG" id="COG3710">
    <property type="taxonomic scope" value="Bacteria"/>
</dbReference>
<dbReference type="HOGENOM" id="CLU_085388_0_0_6"/>
<dbReference type="PHI-base" id="PHI:8492"/>
<dbReference type="Proteomes" id="UP000002493">
    <property type="component" value="Chromosome 1"/>
</dbReference>
<dbReference type="GO" id="GO:0005886">
    <property type="term" value="C:plasma membrane"/>
    <property type="evidence" value="ECO:0007669"/>
    <property type="project" value="UniProtKB-SubCell"/>
</dbReference>
<dbReference type="GO" id="GO:0003677">
    <property type="term" value="F:DNA binding"/>
    <property type="evidence" value="ECO:0007669"/>
    <property type="project" value="UniProtKB-KW"/>
</dbReference>
<dbReference type="GO" id="GO:0000160">
    <property type="term" value="P:phosphorelay signal transduction system"/>
    <property type="evidence" value="ECO:0007669"/>
    <property type="project" value="UniProtKB-KW"/>
</dbReference>
<dbReference type="GO" id="GO:0006355">
    <property type="term" value="P:regulation of DNA-templated transcription"/>
    <property type="evidence" value="ECO:0007669"/>
    <property type="project" value="InterPro"/>
</dbReference>
<dbReference type="CDD" id="cd00383">
    <property type="entry name" value="trans_reg_C"/>
    <property type="match status" value="1"/>
</dbReference>
<dbReference type="Gene3D" id="1.10.10.10">
    <property type="entry name" value="Winged helix-like DNA-binding domain superfamily/Winged helix DNA-binding domain"/>
    <property type="match status" value="1"/>
</dbReference>
<dbReference type="InterPro" id="IPR001867">
    <property type="entry name" value="OmpR/PhoB-type_DNA-bd"/>
</dbReference>
<dbReference type="InterPro" id="IPR016032">
    <property type="entry name" value="Sig_transdc_resp-reg_C-effctor"/>
</dbReference>
<dbReference type="InterPro" id="IPR036388">
    <property type="entry name" value="WH-like_DNA-bd_sf"/>
</dbReference>
<dbReference type="Pfam" id="PF00486">
    <property type="entry name" value="Trans_reg_C"/>
    <property type="match status" value="1"/>
</dbReference>
<dbReference type="SMART" id="SM00862">
    <property type="entry name" value="Trans_reg_C"/>
    <property type="match status" value="1"/>
</dbReference>
<dbReference type="SUPFAM" id="SSF46894">
    <property type="entry name" value="C-terminal effector domain of the bipartite response regulators"/>
    <property type="match status" value="1"/>
</dbReference>
<dbReference type="PROSITE" id="PS51755">
    <property type="entry name" value="OMPR_PHOB"/>
    <property type="match status" value="1"/>
</dbReference>